<feature type="signal peptide" evidence="1 8">
    <location>
        <begin position="1"/>
        <end position="29"/>
    </location>
</feature>
<feature type="chain" id="PRO_0000019764" description="Bifunctional muramidase/DL-endopeptidase CwlT">
    <location>
        <begin position="30"/>
        <end position="329"/>
    </location>
</feature>
<feature type="domain" description="NlpC/P60" evidence="2">
    <location>
        <begin position="206"/>
        <end position="329"/>
    </location>
</feature>
<feature type="region of interest" description="Muramidase" evidence="7">
    <location>
        <begin position="59"/>
        <end position="192"/>
    </location>
</feature>
<feature type="active site" description="Nucleophile" evidence="2">
    <location>
        <position position="237"/>
    </location>
</feature>
<feature type="active site" description="Proton acceptor" evidence="2">
    <location>
        <position position="290"/>
    </location>
</feature>
<feature type="active site" evidence="2">
    <location>
        <position position="302"/>
    </location>
</feature>
<feature type="mutagenesis site" description="No detectable transfer of ICEBs1." evidence="4">
    <location>
        <begin position="1"/>
        <end position="29"/>
    </location>
</feature>
<feature type="mutagenesis site" description="No detectable change in conjugation efficiency." evidence="4">
    <original>C</original>
    <variation>A</variation>
    <location>
        <position position="23"/>
    </location>
</feature>
<feature type="mutagenesis site" description="Loss of muramidase activity. Shows no detectable transfer of ICEBs1." evidence="3 4">
    <original>E</original>
    <variation>Q</variation>
    <location>
        <position position="87"/>
    </location>
</feature>
<feature type="mutagenesis site" description="Loss of muramidase activity." evidence="3">
    <original>D</original>
    <variation>N</variation>
    <location>
        <position position="94"/>
    </location>
</feature>
<feature type="mutagenesis site" description="Retains 50% of muramidase activity." evidence="3">
    <original>S</original>
    <variation>A</variation>
    <location>
        <position position="98"/>
    </location>
</feature>
<feature type="mutagenesis site" description="Retains 30% of muramidase activity." evidence="3">
    <original>S</original>
    <variation>A</variation>
    <location>
        <position position="99"/>
    </location>
</feature>
<feature type="mutagenesis site" description="Retains 10% of muramidase activity." evidence="3">
    <original>E</original>
    <variation>Q</variation>
    <location>
        <position position="100"/>
    </location>
</feature>
<feature type="mutagenesis site" description="Retains 30% of muramidase activity." evidence="3">
    <original>S</original>
    <variation>A</variation>
    <location>
        <position position="101"/>
    </location>
</feature>
<feature type="mutagenesis site" description="Retains 10% of muramidase activity." evidence="3">
    <original>S</original>
    <variation>A</variation>
    <location>
        <position position="115"/>
    </location>
</feature>
<feature type="mutagenesis site" description="Retains 30% of muramidase activity." evidence="3">
    <original>D</original>
    <variation>N</variation>
    <location>
        <position position="133"/>
    </location>
</feature>
<feature type="mutagenesis site" description="Does not affect muramidase activity." evidence="3">
    <original>S</original>
    <variation>A</variation>
    <location>
        <position position="167"/>
    </location>
</feature>
<feature type="mutagenesis site" description="Loss of peptidase activity. 1000-fold decrease in conjugation efficiency." evidence="4">
    <original>C</original>
    <variation>A</variation>
    <location>
        <position position="237"/>
    </location>
</feature>
<protein>
    <recommendedName>
        <fullName evidence="7">Bifunctional muramidase/DL-endopeptidase CwlT</fullName>
        <ecNumber evidence="3">3.2.1.17</ecNumber>
        <ecNumber evidence="2 3">3.4.-.-</ecNumber>
    </recommendedName>
    <alternativeName>
        <fullName evidence="6">Bifunctional cell wall hydrolase CwlT</fullName>
    </alternativeName>
    <alternativeName>
        <fullName evidence="5">Cell wall lytic enzyme T</fullName>
    </alternativeName>
</protein>
<sequence>MISKKVVLPLVFSAPFIFFFVLCIVVVMTISRENQVGDDFIGGGDGEYETVGIAPEVERFRAVFEKYARQEGVFDQVNIIMALTMQESGGRSLDIMQSSESIGLPPNSITDPERSIEVGIKHFKKVFKQAGGDVRLTLQAYNFGSGFIDYVKKNGGKYTKKLALDFSRLQAFKMGWKSYGDPSYVDHVMRYVKGSDKNVKPVKGSMDFYETVMKEALKYEGQPYAWGGSNPETGFDCSGLVQWSFAKAGITLPRTAQEQHGATKKISEKEATAGDLVFFGGTYEGKAITHVGIYVGNGRMFNSNDSGIQYSDLKSGYWRDHLVSFGRIK</sequence>
<name>CWLT_BACSU</name>
<reference key="1">
    <citation type="submission" date="1997-03" db="EMBL/GenBank/DDBJ databases">
        <title>A 148 kbp sequence of the region between 35 and 47 degree of the Bacillus subtilis genome.</title>
        <authorList>
            <person name="Kasahara Y."/>
            <person name="Nakai S."/>
            <person name="Lee S."/>
            <person name="Sadaie Y."/>
            <person name="Ogasawara N."/>
        </authorList>
    </citation>
    <scope>NUCLEOTIDE SEQUENCE [GENOMIC DNA]</scope>
    <source>
        <strain>168</strain>
    </source>
</reference>
<reference key="2">
    <citation type="journal article" date="1997" name="Nature">
        <title>The complete genome sequence of the Gram-positive bacterium Bacillus subtilis.</title>
        <authorList>
            <person name="Kunst F."/>
            <person name="Ogasawara N."/>
            <person name="Moszer I."/>
            <person name="Albertini A.M."/>
            <person name="Alloni G."/>
            <person name="Azevedo V."/>
            <person name="Bertero M.G."/>
            <person name="Bessieres P."/>
            <person name="Bolotin A."/>
            <person name="Borchert S."/>
            <person name="Borriss R."/>
            <person name="Boursier L."/>
            <person name="Brans A."/>
            <person name="Braun M."/>
            <person name="Brignell S.C."/>
            <person name="Bron S."/>
            <person name="Brouillet S."/>
            <person name="Bruschi C.V."/>
            <person name="Caldwell B."/>
            <person name="Capuano V."/>
            <person name="Carter N.M."/>
            <person name="Choi S.-K."/>
            <person name="Codani J.-J."/>
            <person name="Connerton I.F."/>
            <person name="Cummings N.J."/>
            <person name="Daniel R.A."/>
            <person name="Denizot F."/>
            <person name="Devine K.M."/>
            <person name="Duesterhoeft A."/>
            <person name="Ehrlich S.D."/>
            <person name="Emmerson P.T."/>
            <person name="Entian K.-D."/>
            <person name="Errington J."/>
            <person name="Fabret C."/>
            <person name="Ferrari E."/>
            <person name="Foulger D."/>
            <person name="Fritz C."/>
            <person name="Fujita M."/>
            <person name="Fujita Y."/>
            <person name="Fuma S."/>
            <person name="Galizzi A."/>
            <person name="Galleron N."/>
            <person name="Ghim S.-Y."/>
            <person name="Glaser P."/>
            <person name="Goffeau A."/>
            <person name="Golightly E.J."/>
            <person name="Grandi G."/>
            <person name="Guiseppi G."/>
            <person name="Guy B.J."/>
            <person name="Haga K."/>
            <person name="Haiech J."/>
            <person name="Harwood C.R."/>
            <person name="Henaut A."/>
            <person name="Hilbert H."/>
            <person name="Holsappel S."/>
            <person name="Hosono S."/>
            <person name="Hullo M.-F."/>
            <person name="Itaya M."/>
            <person name="Jones L.-M."/>
            <person name="Joris B."/>
            <person name="Karamata D."/>
            <person name="Kasahara Y."/>
            <person name="Klaerr-Blanchard M."/>
            <person name="Klein C."/>
            <person name="Kobayashi Y."/>
            <person name="Koetter P."/>
            <person name="Koningstein G."/>
            <person name="Krogh S."/>
            <person name="Kumano M."/>
            <person name="Kurita K."/>
            <person name="Lapidus A."/>
            <person name="Lardinois S."/>
            <person name="Lauber J."/>
            <person name="Lazarevic V."/>
            <person name="Lee S.-M."/>
            <person name="Levine A."/>
            <person name="Liu H."/>
            <person name="Masuda S."/>
            <person name="Mauel C."/>
            <person name="Medigue C."/>
            <person name="Medina N."/>
            <person name="Mellado R.P."/>
            <person name="Mizuno M."/>
            <person name="Moestl D."/>
            <person name="Nakai S."/>
            <person name="Noback M."/>
            <person name="Noone D."/>
            <person name="O'Reilly M."/>
            <person name="Ogawa K."/>
            <person name="Ogiwara A."/>
            <person name="Oudega B."/>
            <person name="Park S.-H."/>
            <person name="Parro V."/>
            <person name="Pohl T.M."/>
            <person name="Portetelle D."/>
            <person name="Porwollik S."/>
            <person name="Prescott A.M."/>
            <person name="Presecan E."/>
            <person name="Pujic P."/>
            <person name="Purnelle B."/>
            <person name="Rapoport G."/>
            <person name="Rey M."/>
            <person name="Reynolds S."/>
            <person name="Rieger M."/>
            <person name="Rivolta C."/>
            <person name="Rocha E."/>
            <person name="Roche B."/>
            <person name="Rose M."/>
            <person name="Sadaie Y."/>
            <person name="Sato T."/>
            <person name="Scanlan E."/>
            <person name="Schleich S."/>
            <person name="Schroeter R."/>
            <person name="Scoffone F."/>
            <person name="Sekiguchi J."/>
            <person name="Sekowska A."/>
            <person name="Seror S.J."/>
            <person name="Serror P."/>
            <person name="Shin B.-S."/>
            <person name="Soldo B."/>
            <person name="Sorokin A."/>
            <person name="Tacconi E."/>
            <person name="Takagi T."/>
            <person name="Takahashi H."/>
            <person name="Takemaru K."/>
            <person name="Takeuchi M."/>
            <person name="Tamakoshi A."/>
            <person name="Tanaka T."/>
            <person name="Terpstra P."/>
            <person name="Tognoni A."/>
            <person name="Tosato V."/>
            <person name="Uchiyama S."/>
            <person name="Vandenbol M."/>
            <person name="Vannier F."/>
            <person name="Vassarotti A."/>
            <person name="Viari A."/>
            <person name="Wambutt R."/>
            <person name="Wedler E."/>
            <person name="Wedler H."/>
            <person name="Weitzenegger T."/>
            <person name="Winters P."/>
            <person name="Wipat A."/>
            <person name="Yamamoto H."/>
            <person name="Yamane K."/>
            <person name="Yasumoto K."/>
            <person name="Yata K."/>
            <person name="Yoshida K."/>
            <person name="Yoshikawa H.-F."/>
            <person name="Zumstein E."/>
            <person name="Yoshikawa H."/>
            <person name="Danchin A."/>
        </authorList>
    </citation>
    <scope>NUCLEOTIDE SEQUENCE [LARGE SCALE GENOMIC DNA]</scope>
    <source>
        <strain>168</strain>
    </source>
</reference>
<reference key="3">
    <citation type="journal article" date="2008" name="J. Biol. Chem.">
        <title>Identification and characterization of novel cell wall hydrolase CwlT: a two-domain autolysin exhibiting n-acetylmuramidase and DL-endopeptidase activities.</title>
        <authorList>
            <person name="Fukushima T."/>
            <person name="Kitajima T."/>
            <person name="Yamaguchi H."/>
            <person name="Ouyang Q."/>
            <person name="Furuhata K."/>
            <person name="Yamamoto H."/>
            <person name="Shida T."/>
            <person name="Sekiguchi J."/>
        </authorList>
    </citation>
    <scope>FUNCTION</scope>
    <scope>CATALYTIC ACTIVITY</scope>
    <scope>BIOPHYSICOCHEMICAL PROPERTIES</scope>
    <scope>MUTAGENESIS OF GLU-87; ASP-94; SER-98; SER-99; GLU-100; SER-101; SER-115; ASP-133 AND SER-167</scope>
</reference>
<reference key="4">
    <citation type="journal article" date="2014" name="J. Bacteriol.">
        <title>The bifunctional cell wall hydrolase CwlT is needed for conjugation of the integrative and conjugative element ICEBs1 in Bacillus subtilis and B. anthracis.</title>
        <authorList>
            <person name="DeWitt T."/>
            <person name="Grossman A.D."/>
        </authorList>
    </citation>
    <scope>FUNCTION AS A HYDROLASE</scope>
    <scope>FUNCTION IN ICEBS1 CONJUGATION</scope>
    <scope>SUBCELLULAR LOCATION</scope>
    <scope>DISRUPTION PHENOTYPE</scope>
    <scope>MUTAGENESIS OF 1-MET--THR-29; CYS-23; GLU-87 AND CYS-237</scope>
    <source>
        <strain>168 / JH642</strain>
    </source>
</reference>
<comment type="function">
    <text evidence="3 4">Exhibits both muramidase and DL-endopeptidase activities (PubMed:18305117, PubMed:24532767). The N-terminal region acts as a N-acetylmuramidase, which cleaves the bond between N-acetylmuramic acid and N-acetyl-D-glucosamine (MurNAc-GlcNAc) in peptidoglycan (PubMed:18305117). The C-terminal region acts as a DL-endopeptidase that cleaves the bond between D-gamma-glutamate and meso-diaminopimelic acid (PubMed:18305117). Cannot degrade purified B.anthracis peptidoglycan, which differ from those of B.subtilis (PubMed:24532767). CwlT is required for ICEBs1 conjugation: the muramidase activity is essential, whereas the peptidase activity is partially dispensable for transfer of ICEBs1 (PubMed:24532767).</text>
</comment>
<comment type="catalytic activity">
    <reaction evidence="3">
        <text>Hydrolysis of (1-&gt;4)-beta-linkages between N-acetylmuramic acid and N-acetyl-D-glucosamine residues in a peptidoglycan and between N-acetyl-D-glucosamine residues in chitodextrins.</text>
        <dbReference type="EC" id="3.2.1.17"/>
    </reaction>
</comment>
<comment type="biophysicochemical properties">
    <phDependence>
        <text evidence="3">Optimum pH is 6.5.</text>
    </phDependence>
    <temperatureDependence>
        <text evidence="3">Optimum temperature is 32 degrees Celsius.</text>
    </temperatureDependence>
</comment>
<comment type="subcellular location">
    <subcellularLocation>
        <location evidence="8">Secreted</location>
    </subcellularLocation>
    <text evidence="4">Accumulates in culture supernatant and some of it is found associated with the cell (PubMed:24532767). The putative signal sequence is required for CwlT to function in conjugation, but the putative lipid attachment site is not (PubMed:24532767).</text>
</comment>
<comment type="disruption phenotype">
    <text evidence="4">Deletion mutant shows no detectable conjugative transfer of ICEBs1.</text>
</comment>
<comment type="miscellaneous">
    <text evidence="3">The cwlT gene is located in the region of the mobile genetic element ICEBs1, an integrative and conjugative element (ICE) found in B.subtilis.</text>
</comment>
<comment type="miscellaneous">
    <text evidence="4">Exogenous CwlT causes lysis of B.subtilis and B.anthracis, most likely by causing at least minimal degradation of the cell wall.</text>
</comment>
<comment type="similarity">
    <text evidence="2">Belongs to the peptidase C40 family.</text>
</comment>
<gene>
    <name evidence="5" type="primary">cwlT</name>
    <name type="synonym">yddH</name>
    <name type="ordered locus">BSU04970</name>
</gene>
<accession>P96645</accession>
<organism>
    <name type="scientific">Bacillus subtilis (strain 168)</name>
    <dbReference type="NCBI Taxonomy" id="224308"/>
    <lineage>
        <taxon>Bacteria</taxon>
        <taxon>Bacillati</taxon>
        <taxon>Bacillota</taxon>
        <taxon>Bacilli</taxon>
        <taxon>Bacillales</taxon>
        <taxon>Bacillaceae</taxon>
        <taxon>Bacillus</taxon>
    </lineage>
</organism>
<evidence type="ECO:0000255" key="1"/>
<evidence type="ECO:0000255" key="2">
    <source>
        <dbReference type="PROSITE-ProRule" id="PRU01284"/>
    </source>
</evidence>
<evidence type="ECO:0000269" key="3">
    <source>
    </source>
</evidence>
<evidence type="ECO:0000269" key="4">
    <source>
    </source>
</evidence>
<evidence type="ECO:0000303" key="5">
    <source>
    </source>
</evidence>
<evidence type="ECO:0000303" key="6">
    <source>
    </source>
</evidence>
<evidence type="ECO:0000305" key="7"/>
<evidence type="ECO:0000305" key="8">
    <source>
    </source>
</evidence>
<keyword id="KW-0961">Cell wall biogenesis/degradation</keyword>
<keyword id="KW-0184">Conjugation</keyword>
<keyword id="KW-0378">Hydrolase</keyword>
<keyword id="KW-0645">Protease</keyword>
<keyword id="KW-1185">Reference proteome</keyword>
<keyword id="KW-0964">Secreted</keyword>
<keyword id="KW-0732">Signal</keyword>
<keyword id="KW-0788">Thiol protease</keyword>
<dbReference type="EC" id="3.2.1.17" evidence="3"/>
<dbReference type="EC" id="3.4.-.-" evidence="2 3"/>
<dbReference type="EMBL" id="AB001488">
    <property type="protein sequence ID" value="BAA19334.1"/>
    <property type="molecule type" value="Genomic_DNA"/>
</dbReference>
<dbReference type="EMBL" id="AL009126">
    <property type="protein sequence ID" value="CAB12304.1"/>
    <property type="molecule type" value="Genomic_DNA"/>
</dbReference>
<dbReference type="PIR" id="A69776">
    <property type="entry name" value="A69776"/>
</dbReference>
<dbReference type="RefSeq" id="NP_388378.1">
    <property type="nucleotide sequence ID" value="NC_000964.3"/>
</dbReference>
<dbReference type="RefSeq" id="WP_009966633.1">
    <property type="nucleotide sequence ID" value="NZ_OZ025638.1"/>
</dbReference>
<dbReference type="SMR" id="P96645"/>
<dbReference type="FunCoup" id="P96645">
    <property type="interactions" value="57"/>
</dbReference>
<dbReference type="STRING" id="224308.BSU04970"/>
<dbReference type="CAZy" id="GH23">
    <property type="family name" value="Glycoside Hydrolase Family 23"/>
</dbReference>
<dbReference type="MEROPS" id="C40.007"/>
<dbReference type="PaxDb" id="224308-BSU04970"/>
<dbReference type="DNASU" id="938136"/>
<dbReference type="EnsemblBacteria" id="CAB12304">
    <property type="protein sequence ID" value="CAB12304"/>
    <property type="gene ID" value="BSU_04970"/>
</dbReference>
<dbReference type="GeneID" id="938136"/>
<dbReference type="KEGG" id="bsu:BSU04970"/>
<dbReference type="PATRIC" id="fig|224308.179.peg.528"/>
<dbReference type="eggNOG" id="COG0741">
    <property type="taxonomic scope" value="Bacteria"/>
</dbReference>
<dbReference type="eggNOG" id="COG0791">
    <property type="taxonomic scope" value="Bacteria"/>
</dbReference>
<dbReference type="InParanoid" id="P96645"/>
<dbReference type="OrthoDB" id="9813368at2"/>
<dbReference type="PhylomeDB" id="P96645"/>
<dbReference type="BioCyc" id="BSUB:BSU04970-MONOMER"/>
<dbReference type="Proteomes" id="UP000001570">
    <property type="component" value="Chromosome"/>
</dbReference>
<dbReference type="GO" id="GO:0005576">
    <property type="term" value="C:extracellular region"/>
    <property type="evidence" value="ECO:0007669"/>
    <property type="project" value="UniProtKB-SubCell"/>
</dbReference>
<dbReference type="GO" id="GO:0008234">
    <property type="term" value="F:cysteine-type peptidase activity"/>
    <property type="evidence" value="ECO:0007669"/>
    <property type="project" value="UniProtKB-KW"/>
</dbReference>
<dbReference type="GO" id="GO:0004175">
    <property type="term" value="F:endopeptidase activity"/>
    <property type="evidence" value="ECO:0000314"/>
    <property type="project" value="CACAO"/>
</dbReference>
<dbReference type="GO" id="GO:0003796">
    <property type="term" value="F:lysozyme activity"/>
    <property type="evidence" value="ECO:0000314"/>
    <property type="project" value="CACAO"/>
</dbReference>
<dbReference type="GO" id="GO:0071555">
    <property type="term" value="P:cell wall organization"/>
    <property type="evidence" value="ECO:0007669"/>
    <property type="project" value="UniProtKB-KW"/>
</dbReference>
<dbReference type="GO" id="GO:0000270">
    <property type="term" value="P:peptidoglycan metabolic process"/>
    <property type="evidence" value="ECO:0000318"/>
    <property type="project" value="GO_Central"/>
</dbReference>
<dbReference type="GO" id="GO:0006508">
    <property type="term" value="P:proteolysis"/>
    <property type="evidence" value="ECO:0007669"/>
    <property type="project" value="UniProtKB-KW"/>
</dbReference>
<dbReference type="CDD" id="cd16891">
    <property type="entry name" value="CwlT-like"/>
    <property type="match status" value="1"/>
</dbReference>
<dbReference type="Gene3D" id="1.10.530.10">
    <property type="match status" value="1"/>
</dbReference>
<dbReference type="Gene3D" id="3.90.1720.10">
    <property type="entry name" value="endopeptidase domain like (from Nostoc punctiforme)"/>
    <property type="match status" value="1"/>
</dbReference>
<dbReference type="InterPro" id="IPR047194">
    <property type="entry name" value="CwlT-like_lysozyme"/>
</dbReference>
<dbReference type="InterPro" id="IPR023346">
    <property type="entry name" value="Lysozyme-like_dom_sf"/>
</dbReference>
<dbReference type="InterPro" id="IPR000064">
    <property type="entry name" value="NLP_P60_dom"/>
</dbReference>
<dbReference type="InterPro" id="IPR038765">
    <property type="entry name" value="Papain-like_cys_pep_sf"/>
</dbReference>
<dbReference type="InterPro" id="IPR051202">
    <property type="entry name" value="Peptidase_C40"/>
</dbReference>
<dbReference type="PANTHER" id="PTHR47053:SF5">
    <property type="entry name" value="BIFUNCTIONAL MURAMIDASE_DL-ENDOPEPTIDASE CWLT"/>
    <property type="match status" value="1"/>
</dbReference>
<dbReference type="PANTHER" id="PTHR47053">
    <property type="entry name" value="MUREIN DD-ENDOPEPTIDASE MEPH-RELATED"/>
    <property type="match status" value="1"/>
</dbReference>
<dbReference type="Pfam" id="PF13702">
    <property type="entry name" value="Lysozyme_like"/>
    <property type="match status" value="1"/>
</dbReference>
<dbReference type="Pfam" id="PF00877">
    <property type="entry name" value="NLPC_P60"/>
    <property type="match status" value="1"/>
</dbReference>
<dbReference type="SUPFAM" id="SSF54001">
    <property type="entry name" value="Cysteine proteinases"/>
    <property type="match status" value="1"/>
</dbReference>
<dbReference type="SUPFAM" id="SSF53955">
    <property type="entry name" value="Lysozyme-like"/>
    <property type="match status" value="1"/>
</dbReference>
<dbReference type="PROSITE" id="PS51935">
    <property type="entry name" value="NLPC_P60"/>
    <property type="match status" value="1"/>
</dbReference>
<proteinExistence type="evidence at protein level"/>